<keyword id="KW-0328">Glycosyltransferase</keyword>
<keyword id="KW-0448">Lipopolysaccharide biosynthesis</keyword>
<keyword id="KW-1185">Reference proteome</keyword>
<keyword id="KW-0808">Transferase</keyword>
<comment type="pathway">
    <text>Slime biogenesis; slime polysaccharide biosynthesis.</text>
</comment>
<comment type="similarity">
    <text evidence="1">Belongs to the glycosyltransferase group 1 family. Glycosyltransferase 4 subfamily.</text>
</comment>
<reference key="1">
    <citation type="journal article" date="1991" name="Mol. Microbiol.">
        <title>Structure and sequence of the rfb (O antigen) gene cluster of Salmonella serovar typhimurium (strain LT2).</title>
        <authorList>
            <person name="Jiang X.-M."/>
            <person name="Neal B."/>
            <person name="Santiago F."/>
            <person name="Lee S.J."/>
            <person name="Romana L.K."/>
            <person name="Reeves P.R."/>
        </authorList>
    </citation>
    <scope>NUCLEOTIDE SEQUENCE [GENOMIC DNA]</scope>
    <source>
        <strain>LT2</strain>
    </source>
</reference>
<reference key="2">
    <citation type="journal article" date="2001" name="Nature">
        <title>Complete genome sequence of Salmonella enterica serovar Typhimurium LT2.</title>
        <authorList>
            <person name="McClelland M."/>
            <person name="Sanderson K.E."/>
            <person name="Spieth J."/>
            <person name="Clifton S.W."/>
            <person name="Latreille P."/>
            <person name="Courtney L."/>
            <person name="Porwollik S."/>
            <person name="Ali J."/>
            <person name="Dante M."/>
            <person name="Du F."/>
            <person name="Hou S."/>
            <person name="Layman D."/>
            <person name="Leonard S."/>
            <person name="Nguyen C."/>
            <person name="Scott K."/>
            <person name="Holmes A."/>
            <person name="Grewal N."/>
            <person name="Mulvaney E."/>
            <person name="Ryan E."/>
            <person name="Sun H."/>
            <person name="Florea L."/>
            <person name="Miller W."/>
            <person name="Stoneking T."/>
            <person name="Nhan M."/>
            <person name="Waterston R."/>
            <person name="Wilson R.K."/>
        </authorList>
    </citation>
    <scope>NUCLEOTIDE SEQUENCE [LARGE SCALE GENOMIC DNA]</scope>
    <source>
        <strain>LT2 / SGSC1412 / ATCC 700720</strain>
    </source>
</reference>
<dbReference type="EC" id="2.4.-.-"/>
<dbReference type="EMBL" id="X56793">
    <property type="protein sequence ID" value="CAA40132.1"/>
    <property type="molecule type" value="Genomic_DNA"/>
</dbReference>
<dbReference type="EMBL" id="AE006468">
    <property type="protein sequence ID" value="AAL21004.1"/>
    <property type="molecule type" value="Genomic_DNA"/>
</dbReference>
<dbReference type="PIR" id="S15296">
    <property type="entry name" value="S15296"/>
</dbReference>
<dbReference type="RefSeq" id="NP_461045.1">
    <property type="nucleotide sequence ID" value="NC_003197.2"/>
</dbReference>
<dbReference type="RefSeq" id="WP_000868521.1">
    <property type="nucleotide sequence ID" value="NC_003197.2"/>
</dbReference>
<dbReference type="SMR" id="P26388"/>
<dbReference type="STRING" id="99287.STM2100"/>
<dbReference type="CAZy" id="GT4">
    <property type="family name" value="Glycosyltransferase Family 4"/>
</dbReference>
<dbReference type="PaxDb" id="99287-STM2100"/>
<dbReference type="DNASU" id="1253621"/>
<dbReference type="GeneID" id="1253621"/>
<dbReference type="KEGG" id="stm:STM2100"/>
<dbReference type="PATRIC" id="fig|99287.12.peg.2222"/>
<dbReference type="HOGENOM" id="CLU_009583_14_3_6"/>
<dbReference type="OMA" id="RIALRGW"/>
<dbReference type="PhylomeDB" id="P26388"/>
<dbReference type="BioCyc" id="SENT99287:STM2100-MONOMER"/>
<dbReference type="UniPathway" id="UPA00936"/>
<dbReference type="Proteomes" id="UP000001014">
    <property type="component" value="Chromosome"/>
</dbReference>
<dbReference type="GO" id="GO:0016757">
    <property type="term" value="F:glycosyltransferase activity"/>
    <property type="evidence" value="ECO:0000318"/>
    <property type="project" value="GO_Central"/>
</dbReference>
<dbReference type="GO" id="GO:0009103">
    <property type="term" value="P:lipopolysaccharide biosynthetic process"/>
    <property type="evidence" value="ECO:0007669"/>
    <property type="project" value="UniProtKB-KW"/>
</dbReference>
<dbReference type="GO" id="GO:0045228">
    <property type="term" value="P:slime layer polysaccharide biosynthetic process"/>
    <property type="evidence" value="ECO:0007669"/>
    <property type="project" value="UniProtKB-UniPathway"/>
</dbReference>
<dbReference type="Gene3D" id="3.40.50.2000">
    <property type="entry name" value="Glycogen Phosphorylase B"/>
    <property type="match status" value="2"/>
</dbReference>
<dbReference type="InterPro" id="IPR023884">
    <property type="entry name" value="Colanic_acid_synth_WcaL"/>
</dbReference>
<dbReference type="InterPro" id="IPR001296">
    <property type="entry name" value="Glyco_trans_1"/>
</dbReference>
<dbReference type="InterPro" id="IPR028098">
    <property type="entry name" value="Glyco_trans_4-like_N"/>
</dbReference>
<dbReference type="NCBIfam" id="TIGR04005">
    <property type="entry name" value="wcaL"/>
    <property type="match status" value="1"/>
</dbReference>
<dbReference type="PANTHER" id="PTHR12526:SF640">
    <property type="entry name" value="COLANIC ACID BIOSYNTHESIS GLYCOSYLTRANSFERASE WCAL-RELATED"/>
    <property type="match status" value="1"/>
</dbReference>
<dbReference type="PANTHER" id="PTHR12526">
    <property type="entry name" value="GLYCOSYLTRANSFERASE"/>
    <property type="match status" value="1"/>
</dbReference>
<dbReference type="Pfam" id="PF13439">
    <property type="entry name" value="Glyco_transf_4"/>
    <property type="match status" value="1"/>
</dbReference>
<dbReference type="Pfam" id="PF00534">
    <property type="entry name" value="Glycos_transf_1"/>
    <property type="match status" value="1"/>
</dbReference>
<dbReference type="SUPFAM" id="SSF53756">
    <property type="entry name" value="UDP-Glycosyltransferase/glycogen phosphorylase"/>
    <property type="match status" value="1"/>
</dbReference>
<name>WCAL_SALTY</name>
<sequence>MKVSFFLLKFPLSSETFVLNQITAFIDMGHEVEIVALQKGDTQHTHAAWEKYGLAAKTRWLQDEPQGRLAKLRYRACKTLPGLHRAATWKALNFTRYGDESRNLILSAICAQVSQPFVADVFIAHFGPAGVTAAKLRELGVLRGKIATIFHGIDISSREVLSHYTPEYQQLFRRGDLMLPISDLWAGRLKSMGCPPEKIAVSRMGVDMTRFTHRSVKAPGMPLEMISVARLTEKKGLHVAIEACRQLKAQGVAFRYRILGIGPWERRLRTLIEQYQLEDVIEMPGFKPSHEVKAMLDDADVFLLPSITGTDGDMEGIPVALMEAMAVGIPVVSTVHSGIPELVEAGKSGWLVPENDAQALAARLAEFSRIDHDTLESVITRAREKVAQDFNQQAINRQLASLLQTI</sequence>
<evidence type="ECO:0000305" key="1"/>
<accession>P26388</accession>
<gene>
    <name type="primary">wcaL</name>
    <name type="ordered locus">STM2100</name>
</gene>
<proteinExistence type="inferred from homology"/>
<protein>
    <recommendedName>
        <fullName>Putative colanic acid biosynthesis glycosyltransferase WcaL</fullName>
        <ecNumber>2.4.-.-</ecNumber>
    </recommendedName>
</protein>
<organism>
    <name type="scientific">Salmonella typhimurium (strain LT2 / SGSC1412 / ATCC 700720)</name>
    <dbReference type="NCBI Taxonomy" id="99287"/>
    <lineage>
        <taxon>Bacteria</taxon>
        <taxon>Pseudomonadati</taxon>
        <taxon>Pseudomonadota</taxon>
        <taxon>Gammaproteobacteria</taxon>
        <taxon>Enterobacterales</taxon>
        <taxon>Enterobacteriaceae</taxon>
        <taxon>Salmonella</taxon>
    </lineage>
</organism>
<feature type="chain" id="PRO_0000080312" description="Putative colanic acid biosynthesis glycosyltransferase WcaL">
    <location>
        <begin position="1"/>
        <end position="406"/>
    </location>
</feature>